<reference key="1">
    <citation type="journal article" date="2000" name="Cytogenet. Cell Genet.">
        <title>Human secretin (SCT): gene structure, chromosome location, and distribution of mRNA.</title>
        <authorList>
            <person name="Whitmore T.E."/>
            <person name="Holloway J.L."/>
            <person name="Lofton-Day C.E."/>
            <person name="Maurer M.F."/>
            <person name="Chen L."/>
            <person name="Quinton T.J."/>
            <person name="Vincent J.B."/>
            <person name="Scherer S.W."/>
            <person name="Lok S."/>
        </authorList>
    </citation>
    <scope>NUCLEOTIDE SEQUENCE [GENOMIC DNA]</scope>
</reference>
<reference key="2">
    <citation type="journal article" date="1985" name="IRCS Med. Sci.">
        <title>Human secretin is not identical to the porcine/bovine hormone.</title>
        <authorList>
            <person name="Carlquist M."/>
            <person name="Joernvall H."/>
            <person name="Forssmann W.-G."/>
            <person name="Thulin L."/>
            <person name="Johansson C."/>
            <person name="Mutt V."/>
        </authorList>
    </citation>
    <scope>PROTEIN SEQUENCE OF 28-54</scope>
    <scope>SUBCELLULAR LOCATION</scope>
    <scope>AMIDATION AT VAL-54</scope>
</reference>
<reference key="3">
    <citation type="journal article" date="2013" name="Ann. Transl. Med.">
        <title>The physiological roles of secretin and its receptor.</title>
        <authorList>
            <person name="Afroze S."/>
            <person name="Meng F."/>
            <person name="Jensen K."/>
            <person name="McDaniel K."/>
            <person name="Rahal K."/>
            <person name="Onori P."/>
            <person name="Gaudio E."/>
            <person name="Alpini G."/>
            <person name="Glaser S.S."/>
        </authorList>
    </citation>
    <scope>REVIEW</scope>
</reference>
<reference key="4">
    <citation type="journal article" date="2018" name="Cell">
        <title>Secretin-activated brown fat mediates prandial thermogenesis to induce satiation.</title>
        <authorList>
            <person name="Li Y."/>
            <person name="Schnabl K."/>
            <person name="Gabler S.M."/>
            <person name="Willershaeuser M."/>
            <person name="Reber J."/>
            <person name="Karlas A."/>
            <person name="Laurila S."/>
            <person name="Lahesmaa M."/>
            <person name="U Din M."/>
            <person name="Bast-Habersbrunner A."/>
            <person name="Virtanen K.A."/>
            <person name="Fromme T."/>
            <person name="Bolze F."/>
            <person name="O'Farrell L.S."/>
            <person name="Alsina-Fernandez J."/>
            <person name="Coskun T."/>
            <person name="Ntziachristos V."/>
            <person name="Nuutila P."/>
            <person name="Klingenspor M."/>
        </authorList>
    </citation>
    <scope>FUNCTION</scope>
    <scope>INDUCTION</scope>
</reference>
<reference evidence="15" key="5">
    <citation type="journal article" date="2020" name="Biochem. Biophys. Res. Commun.">
        <title>Structure of the human secretin receptor coupled to an engineered heterotrimeric G protein.</title>
        <authorList>
            <person name="Fukuhara S."/>
            <person name="Kobayashi K."/>
            <person name="Kusakizako T."/>
            <person name="Iida W."/>
            <person name="Kato M."/>
            <person name="Shihoya W."/>
            <person name="Nureki O."/>
        </authorList>
    </citation>
    <scope>STRUCTURE BY ELECTRON MICROSCOPY (2.90 ANGSTROMS) OF 28-54 IN COMPLEX WITH SCTR</scope>
    <scope>FUNCTION</scope>
</reference>
<reference evidence="13 14" key="6">
    <citation type="journal article" date="2020" name="Nat. Commun.">
        <title>Structure and dynamics of the active Gs-coupled human secretin receptor.</title>
        <authorList>
            <person name="Dong M."/>
            <person name="Deganutti G."/>
            <person name="Piper S.J."/>
            <person name="Liang Y.L."/>
            <person name="Khoshouei M."/>
            <person name="Belousoff M.J."/>
            <person name="Harikumar K.G."/>
            <person name="Reynolds C.A."/>
            <person name="Glukhova A."/>
            <person name="Furness S.G.B."/>
            <person name="Christopoulos A."/>
            <person name="Danev R."/>
            <person name="Wootten D."/>
            <person name="Sexton P.M."/>
            <person name="Miller L.J."/>
        </authorList>
    </citation>
    <scope>STRUCTURE BY ELECTRON MICROSCOPY (2.30 ANGSTROMS) OF 28-54 IN COMPLEX WITH SCTR</scope>
    <scope>FUNCTION</scope>
</reference>
<protein>
    <recommendedName>
        <fullName evidence="8">Secretin</fullName>
    </recommendedName>
</protein>
<keyword id="KW-0002">3D-structure</keyword>
<keyword id="KW-0027">Amidation</keyword>
<keyword id="KW-0165">Cleavage on pair of basic residues</keyword>
<keyword id="KW-0903">Direct protein sequencing</keyword>
<keyword id="KW-0372">Hormone</keyword>
<keyword id="KW-0597">Phosphoprotein</keyword>
<keyword id="KW-1267">Proteomics identification</keyword>
<keyword id="KW-1185">Reference proteome</keyword>
<keyword id="KW-0964">Secreted</keyword>
<keyword id="KW-0732">Signal</keyword>
<name>SECR_HUMAN</name>
<gene>
    <name evidence="8 12" type="primary">SCT</name>
</gene>
<proteinExistence type="evidence at protein level"/>
<dbReference type="EMBL" id="AF244355">
    <property type="protein sequence ID" value="AAG31443.1"/>
    <property type="molecule type" value="Genomic_DNA"/>
</dbReference>
<dbReference type="CCDS" id="CCDS7709.1"/>
<dbReference type="RefSeq" id="NP_068739.1">
    <property type="nucleotide sequence ID" value="NM_021920.4"/>
</dbReference>
<dbReference type="PDB" id="6WI9">
    <property type="method" value="EM"/>
    <property type="resolution" value="4.30 A"/>
    <property type="chains" value="P=28-54"/>
</dbReference>
<dbReference type="PDB" id="6WZG">
    <property type="method" value="EM"/>
    <property type="resolution" value="2.30 A"/>
    <property type="chains" value="P=28-54"/>
</dbReference>
<dbReference type="PDB" id="7D3S">
    <property type="method" value="EM"/>
    <property type="resolution" value="2.90 A"/>
    <property type="chains" value="P=28-54"/>
</dbReference>
<dbReference type="PDBsum" id="6WI9"/>
<dbReference type="PDBsum" id="6WZG"/>
<dbReference type="PDBsum" id="7D3S"/>
<dbReference type="EMDB" id="EMD-21683"/>
<dbReference type="EMDB" id="EMD-21972"/>
<dbReference type="EMDB" id="EMD-30566"/>
<dbReference type="SMR" id="P09683"/>
<dbReference type="BioGRID" id="112247">
    <property type="interactions" value="6"/>
</dbReference>
<dbReference type="CORUM" id="P09683"/>
<dbReference type="FunCoup" id="P09683">
    <property type="interactions" value="370"/>
</dbReference>
<dbReference type="IntAct" id="P09683">
    <property type="interactions" value="4"/>
</dbReference>
<dbReference type="STRING" id="9606.ENSP00000176195"/>
<dbReference type="PhosphoSitePlus" id="P09683"/>
<dbReference type="BioMuta" id="SCT"/>
<dbReference type="DMDM" id="12231018"/>
<dbReference type="MassIVE" id="P09683"/>
<dbReference type="PaxDb" id="9606-ENSP00000176195"/>
<dbReference type="PeptideAtlas" id="P09683"/>
<dbReference type="Antibodypedia" id="9839">
    <property type="antibodies" value="195 antibodies from 30 providers"/>
</dbReference>
<dbReference type="DNASU" id="6343"/>
<dbReference type="Ensembl" id="ENST00000176195.4">
    <property type="protein sequence ID" value="ENSP00000176195.3"/>
    <property type="gene ID" value="ENSG00000070031.4"/>
</dbReference>
<dbReference type="Ensembl" id="ENST00000622382.2">
    <property type="protein sequence ID" value="ENSP00000483559.1"/>
    <property type="gene ID" value="ENSG00000274473.2"/>
</dbReference>
<dbReference type="GeneID" id="6343"/>
<dbReference type="KEGG" id="hsa:6343"/>
<dbReference type="MANE-Select" id="ENST00000176195.4">
    <property type="protein sequence ID" value="ENSP00000176195.3"/>
    <property type="RefSeq nucleotide sequence ID" value="NM_021920.4"/>
    <property type="RefSeq protein sequence ID" value="NP_068739.1"/>
</dbReference>
<dbReference type="UCSC" id="uc001lqo.2">
    <property type="organism name" value="human"/>
</dbReference>
<dbReference type="AGR" id="HGNC:10607"/>
<dbReference type="CTD" id="6343"/>
<dbReference type="DisGeNET" id="6343"/>
<dbReference type="GeneCards" id="SCT"/>
<dbReference type="HGNC" id="HGNC:10607">
    <property type="gene designation" value="SCT"/>
</dbReference>
<dbReference type="HPA" id="ENSG00000070031">
    <property type="expression patterns" value="Tissue enriched (intestine)"/>
</dbReference>
<dbReference type="MIM" id="182099">
    <property type="type" value="gene"/>
</dbReference>
<dbReference type="neXtProt" id="NX_P09683"/>
<dbReference type="OpenTargets" id="ENSG00000070031"/>
<dbReference type="PharmGKB" id="PA35017"/>
<dbReference type="VEuPathDB" id="HostDB:ENSG00000070031"/>
<dbReference type="eggNOG" id="ENOG502R8F0">
    <property type="taxonomic scope" value="Eukaryota"/>
</dbReference>
<dbReference type="GeneTree" id="ENSGT00390000002624"/>
<dbReference type="HOGENOM" id="CLU_1991937_0_0_1"/>
<dbReference type="InParanoid" id="P09683"/>
<dbReference type="OMA" id="HAPFPWL"/>
<dbReference type="OrthoDB" id="9417777at2759"/>
<dbReference type="PAN-GO" id="P09683">
    <property type="GO annotations" value="6 GO annotations based on evolutionary models"/>
</dbReference>
<dbReference type="PhylomeDB" id="P09683"/>
<dbReference type="TreeFam" id="TF338215"/>
<dbReference type="PathwayCommons" id="P09683"/>
<dbReference type="Reactome" id="R-HSA-418555">
    <property type="pathway name" value="G alpha (s) signalling events"/>
</dbReference>
<dbReference type="Reactome" id="R-HSA-420092">
    <property type="pathway name" value="Glucagon-type ligand receptors"/>
</dbReference>
<dbReference type="SignaLink" id="P09683"/>
<dbReference type="BioGRID-ORCS" id="6343">
    <property type="hits" value="14 hits in 1145 CRISPR screens"/>
</dbReference>
<dbReference type="GeneWiki" id="Secretin"/>
<dbReference type="GenomeRNAi" id="6343"/>
<dbReference type="Pharos" id="P09683">
    <property type="development level" value="Tbio"/>
</dbReference>
<dbReference type="PRO" id="PR:P09683"/>
<dbReference type="Proteomes" id="UP000005640">
    <property type="component" value="Chromosome 11"/>
</dbReference>
<dbReference type="RNAct" id="P09683">
    <property type="molecule type" value="protein"/>
</dbReference>
<dbReference type="Bgee" id="ENSG00000070031">
    <property type="expression patterns" value="Expressed in duodenum and 89 other cell types or tissues"/>
</dbReference>
<dbReference type="GO" id="GO:0005576">
    <property type="term" value="C:extracellular region"/>
    <property type="evidence" value="ECO:0000304"/>
    <property type="project" value="Reactome"/>
</dbReference>
<dbReference type="GO" id="GO:0005615">
    <property type="term" value="C:extracellular space"/>
    <property type="evidence" value="ECO:0000250"/>
    <property type="project" value="UniProtKB"/>
</dbReference>
<dbReference type="GO" id="GO:0046659">
    <property type="term" value="F:digestive hormone activity"/>
    <property type="evidence" value="ECO:0000250"/>
    <property type="project" value="UniProtKB"/>
</dbReference>
<dbReference type="GO" id="GO:0001664">
    <property type="term" value="F:G protein-coupled receptor binding"/>
    <property type="evidence" value="ECO:0000353"/>
    <property type="project" value="GO_Central"/>
</dbReference>
<dbReference type="GO" id="GO:0005179">
    <property type="term" value="F:hormone activity"/>
    <property type="evidence" value="ECO:0000250"/>
    <property type="project" value="UniProtKB"/>
</dbReference>
<dbReference type="GO" id="GO:0005102">
    <property type="term" value="F:signaling receptor binding"/>
    <property type="evidence" value="ECO:0000318"/>
    <property type="project" value="GO_Central"/>
</dbReference>
<dbReference type="GO" id="GO:0007189">
    <property type="term" value="P:adenylate cyclase-activating G protein-coupled receptor signaling pathway"/>
    <property type="evidence" value="ECO:0000314"/>
    <property type="project" value="UniProtKB"/>
</dbReference>
<dbReference type="GO" id="GO:0007420">
    <property type="term" value="P:brain development"/>
    <property type="evidence" value="ECO:0000318"/>
    <property type="project" value="GO_Central"/>
</dbReference>
<dbReference type="GO" id="GO:0002024">
    <property type="term" value="P:diet induced thermogenesis"/>
    <property type="evidence" value="ECO:0000250"/>
    <property type="project" value="UniProtKB"/>
</dbReference>
<dbReference type="GO" id="GO:0048566">
    <property type="term" value="P:embryonic digestive tract development"/>
    <property type="evidence" value="ECO:0007669"/>
    <property type="project" value="Ensembl"/>
</dbReference>
<dbReference type="GO" id="GO:0021766">
    <property type="term" value="P:hippocampus development"/>
    <property type="evidence" value="ECO:0000250"/>
    <property type="project" value="UniProtKB"/>
</dbReference>
<dbReference type="GO" id="GO:0009992">
    <property type="term" value="P:intracellular water homeostasis"/>
    <property type="evidence" value="ECO:0000250"/>
    <property type="project" value="UniProtKB"/>
</dbReference>
<dbReference type="GO" id="GO:1903640">
    <property type="term" value="P:negative regulation of gastrin-induced gastric acid secretion"/>
    <property type="evidence" value="ECO:0000318"/>
    <property type="project" value="GO_Central"/>
</dbReference>
<dbReference type="GO" id="GO:0030157">
    <property type="term" value="P:pancreatic juice secretion"/>
    <property type="evidence" value="ECO:0000303"/>
    <property type="project" value="UniProtKB"/>
</dbReference>
<dbReference type="GO" id="GO:0141163">
    <property type="term" value="P:positive regulation of cAMP/PKA signal transduction"/>
    <property type="evidence" value="ECO:0007669"/>
    <property type="project" value="Ensembl"/>
</dbReference>
<dbReference type="GO" id="GO:0050996">
    <property type="term" value="P:positive regulation of lipid catabolic process"/>
    <property type="evidence" value="ECO:0000250"/>
    <property type="project" value="UniProtKB"/>
</dbReference>
<dbReference type="GO" id="GO:0090187">
    <property type="term" value="P:positive regulation of pancreatic juice secretion"/>
    <property type="evidence" value="ECO:0000318"/>
    <property type="project" value="GO_Central"/>
</dbReference>
<dbReference type="GO" id="GO:0090274">
    <property type="term" value="P:positive regulation of somatostatin secretion"/>
    <property type="evidence" value="ECO:0000318"/>
    <property type="project" value="GO_Central"/>
</dbReference>
<dbReference type="GO" id="GO:0032098">
    <property type="term" value="P:regulation of appetite"/>
    <property type="evidence" value="ECO:0000250"/>
    <property type="project" value="UniProtKB"/>
</dbReference>
<dbReference type="GO" id="GO:0048167">
    <property type="term" value="P:regulation of synaptic plasticity"/>
    <property type="evidence" value="ECO:0000250"/>
    <property type="project" value="UniProtKB"/>
</dbReference>
<dbReference type="GO" id="GO:0031667">
    <property type="term" value="P:response to nutrient levels"/>
    <property type="evidence" value="ECO:0000250"/>
    <property type="project" value="UniProtKB"/>
</dbReference>
<dbReference type="InterPro" id="IPR000532">
    <property type="entry name" value="Glucagon_GIP_secretin_VIP"/>
</dbReference>
<dbReference type="InterPro" id="IPR015675">
    <property type="entry name" value="Prosecretin"/>
</dbReference>
<dbReference type="PANTHER" id="PTHR17378">
    <property type="entry name" value="SECRETIN"/>
    <property type="match status" value="1"/>
</dbReference>
<dbReference type="PANTHER" id="PTHR17378:SF1">
    <property type="entry name" value="SECRETIN"/>
    <property type="match status" value="1"/>
</dbReference>
<dbReference type="Pfam" id="PF00123">
    <property type="entry name" value="Hormone_2"/>
    <property type="match status" value="1"/>
</dbReference>
<dbReference type="SMART" id="SM00070">
    <property type="entry name" value="GLUCA"/>
    <property type="match status" value="1"/>
</dbReference>
<dbReference type="PROSITE" id="PS00260">
    <property type="entry name" value="GLUCAGON"/>
    <property type="match status" value="1"/>
</dbReference>
<evidence type="ECO:0000250" key="1">
    <source>
        <dbReference type="UniProtKB" id="P11384"/>
    </source>
</evidence>
<evidence type="ECO:0000250" key="2">
    <source>
        <dbReference type="UniProtKB" id="Q08535"/>
    </source>
</evidence>
<evidence type="ECO:0000255" key="3"/>
<evidence type="ECO:0000269" key="4">
    <source>
    </source>
</evidence>
<evidence type="ECO:0000269" key="5">
    <source>
    </source>
</evidence>
<evidence type="ECO:0000269" key="6">
    <source>
    </source>
</evidence>
<evidence type="ECO:0000269" key="7">
    <source ref="2"/>
</evidence>
<evidence type="ECO:0000303" key="8">
    <source>
    </source>
</evidence>
<evidence type="ECO:0000303" key="9">
    <source>
    </source>
</evidence>
<evidence type="ECO:0000305" key="10"/>
<evidence type="ECO:0000305" key="11">
    <source>
    </source>
</evidence>
<evidence type="ECO:0000312" key="12">
    <source>
        <dbReference type="HGNC" id="HGNC:10607"/>
    </source>
</evidence>
<evidence type="ECO:0007744" key="13">
    <source>
        <dbReference type="PDB" id="6WI9"/>
    </source>
</evidence>
<evidence type="ECO:0007744" key="14">
    <source>
        <dbReference type="PDB" id="6WZG"/>
    </source>
</evidence>
<evidence type="ECO:0007744" key="15">
    <source>
        <dbReference type="PDB" id="7D3S"/>
    </source>
</evidence>
<evidence type="ECO:0007829" key="16">
    <source>
        <dbReference type="PDB" id="6WZG"/>
    </source>
</evidence>
<feature type="signal peptide" evidence="3">
    <location>
        <begin position="1"/>
        <end position="18"/>
    </location>
</feature>
<feature type="propeptide" id="PRO_0000011423" evidence="7">
    <location>
        <begin position="19"/>
        <end position="26"/>
    </location>
</feature>
<feature type="peptide" id="PRO_0000011424" description="Secretin" evidence="7">
    <location>
        <begin position="28"/>
        <end position="54"/>
    </location>
</feature>
<feature type="propeptide" id="PRO_0000011425" evidence="7">
    <location>
        <begin position="58"/>
        <end position="121"/>
    </location>
</feature>
<feature type="modified residue" description="Valine amide" evidence="7">
    <location>
        <position position="54"/>
    </location>
</feature>
<feature type="modified residue" description="Phosphoserine" evidence="1">
    <location>
        <position position="58"/>
    </location>
</feature>
<feature type="helix" evidence="16">
    <location>
        <begin position="29"/>
        <end position="53"/>
    </location>
</feature>
<organism>
    <name type="scientific">Homo sapiens</name>
    <name type="common">Human</name>
    <dbReference type="NCBI Taxonomy" id="9606"/>
    <lineage>
        <taxon>Eukaryota</taxon>
        <taxon>Metazoa</taxon>
        <taxon>Chordata</taxon>
        <taxon>Craniata</taxon>
        <taxon>Vertebrata</taxon>
        <taxon>Euteleostomi</taxon>
        <taxon>Mammalia</taxon>
        <taxon>Eutheria</taxon>
        <taxon>Euarchontoglires</taxon>
        <taxon>Primates</taxon>
        <taxon>Haplorrhini</taxon>
        <taxon>Catarrhini</taxon>
        <taxon>Hominidae</taxon>
        <taxon>Homo</taxon>
    </lineage>
</organism>
<sequence>MAPRPLLLLLLLLGGSAARPAPPRARRHSDGTFTSELSRLREGARLQRLLQGLVGKRSEQDAENSMAWTRLSAGLLCPSGSNMPILQAWMPLDGTWSPWLPPGPMVSEPAGAAAEGTLRPR</sequence>
<comment type="function">
    <text evidence="1 2 5 6 9 11">Hormone involved in different processes, such as regulation of the pH of the duodenal content, food intake and water homeostasis (PubMed:25332973). Exerts its biological effects by binding to secretin receptor (SCTR), a G-protein coupled receptor expressed in the basolateral domain of several cells (PubMed:25332973, PubMed:33008599, PubMed:32811827). Acts as a key gastrointestinal hormone by regulating the pH of the duodenal content (By similarity). Secreted by S cells of the duodenum in the crypts of Lieberkuehn and regulates the pH of the duodenum by (1) inhibiting the secretion of gastric acid from the parietal cells of the stomach and (2) stimulating the production of bicarbonate (NaHCO(3)) from the ductal cells of the pancreas (By similarity). Production of bicarbonate is essential to neutralize the pH and ensure no damage is done to the small intestine by the gastric acid (By similarity). In addition to regulating the pH of the duodenal content, plays a central role in diet induced thermogenesis: acts as a non-sympathetic brown fat (BAT) activator mediating prandial thermogenesis, which consequentially induces satiation (Probable). Mechanistically, secretin released by the gut after a meal binds to secretin receptor (SCTR) in brown adipocytes, activating brown fat thermogenesis by stimulating lipolysis, which is sensed in the brain and promotes satiation (By similarity). Also able to stimulate lipolysis in white adipocytes (By similarity). Also plays an important role in cellular osmoregulation: released into the systemic circulation in response to hyperosmolality and acts at different levels in the hypothalamus, pituitary and kidney to regulate water homeostasis (By similarity). Also plays a role in the central nervous system, possibly by acting as a neuropeptide hormone: required for hippocampal synaptic function and neural progenitor cells maintenance (By similarity).</text>
</comment>
<comment type="interaction">
    <interactant intactId="EBI-12844598">
        <id>P09683</id>
    </interactant>
    <interactant intactId="EBI-740220">
        <id>O14964</id>
        <label>HGS</label>
    </interactant>
    <organismsDiffer>false</organismsDiffer>
    <experiments>3</experiments>
</comment>
<comment type="interaction">
    <interactant intactId="EBI-12844598">
        <id>P09683</id>
    </interactant>
    <interactant intactId="EBI-740785">
        <id>P49639</id>
        <label>HOXA1</label>
    </interactant>
    <organismsDiffer>false</organismsDiffer>
    <experiments>3</experiments>
</comment>
<comment type="interaction">
    <interactant intactId="EBI-12844598">
        <id>P09683</id>
    </interactant>
    <interactant intactId="EBI-8025850">
        <id>O14770-4</id>
        <label>MEIS2</label>
    </interactant>
    <organismsDiffer>false</organismsDiffer>
    <experiments>3</experiments>
</comment>
<comment type="interaction">
    <interactant intactId="EBI-12844598">
        <id>P09683</id>
    </interactant>
    <interactant intactId="EBI-739895">
        <id>Q8N6Y0</id>
        <label>USHBP1</label>
    </interactant>
    <organismsDiffer>false</organismsDiffer>
    <experiments>3</experiments>
</comment>
<comment type="subcellular location">
    <subcellularLocation>
        <location evidence="7">Secreted</location>
    </subcellularLocation>
</comment>
<comment type="induction">
    <text evidence="4">Serum secretin levels are increased after single-meal ingestion.</text>
</comment>
<comment type="similarity">
    <text evidence="10">Belongs to the glucagon family.</text>
</comment>
<comment type="online information" name="Wikipedia">
    <link uri="https://en.wikipedia.org/wiki/Secretin"/>
    <text>Secretin entry</text>
</comment>
<accession>P09683</accession>